<keyword id="KW-0472">Membrane</keyword>
<keyword id="KW-0496">Mitochondrion</keyword>
<keyword id="KW-0999">Mitochondrion inner membrane</keyword>
<keyword id="KW-1185">Reference proteome</keyword>
<keyword id="KW-0809">Transit peptide</keyword>
<keyword id="KW-0812">Transmembrane</keyword>
<keyword id="KW-1133">Transmembrane helix</keyword>
<organism>
    <name type="scientific">Saccharomyces cerevisiae (strain ATCC 204508 / S288c)</name>
    <name type="common">Baker's yeast</name>
    <dbReference type="NCBI Taxonomy" id="559292"/>
    <lineage>
        <taxon>Eukaryota</taxon>
        <taxon>Fungi</taxon>
        <taxon>Dikarya</taxon>
        <taxon>Ascomycota</taxon>
        <taxon>Saccharomycotina</taxon>
        <taxon>Saccharomycetes</taxon>
        <taxon>Saccharomycetales</taxon>
        <taxon>Saccharomycetaceae</taxon>
        <taxon>Saccharomyces</taxon>
    </lineage>
</organism>
<sequence length="622" mass="72028">MLITRLRVPTIKRPLLPITSHLVRHCIRTYVATNHGNVRPFITPYKSSLPVRCLIAQRHIRTFPSNDKFTTKASNIETILLRKNNEREFKQSLLADAKNFQERFKINLKWILIKNNRPFSLNEISIIASWLILSQILWLILSTTTFISFYLFVINSVFSQEYIHEKKIYERLLKWLLKDHKCSNQDLEITFSPEDKASMLVLSPDWESNSILIKRLNVRDEILDLDLKFHHINLNVSLKNWLLGRGLITNVSIYGIRGCLNLSNFINLVNSFQGDQKTENFLKTLNNVEITDSEILLKQSLSAQETPSLKFSIYNLSLPRLRLNHFISDILSAKTFSGSINNSLFNLFKRQQKLTAVIENNNKNRMASSKFDFTDNNQENYRTVTHQDDPNYVTTLRLNFININDLKFNGDGKFNWLKDGQVEILADIMLTNSTSHLSSESKYAVVDLKVTCRDLKTTFPQEPPVLSTGDSIVSLDELKPIITFINSYEGMANPILKDFSENERLTNSIIWNSPNVSINRQRKSYPLTTKVTSNSTKEIIKFHNQPNTNANEIVLRCKMVKNLSDLQLININQILDQITMELYVDLTKIVEDWEFKNKNDWMKQWGTTFASQLLLFGFGAMV</sequence>
<feature type="transit peptide" description="Mitochondrion" evidence="1">
    <location>
        <begin position="1"/>
        <end position="70"/>
    </location>
</feature>
<feature type="chain" id="PRO_0000021665" description="Mitochondrial distribution and morphology protein 32">
    <location>
        <begin position="71"/>
        <end position="622"/>
    </location>
</feature>
<feature type="topological domain" description="Mitochondrial matrix" evidence="1">
    <location>
        <begin position="71"/>
        <end position="123"/>
    </location>
</feature>
<feature type="transmembrane region" description="Helical" evidence="1">
    <location>
        <begin position="124"/>
        <end position="144"/>
    </location>
</feature>
<feature type="topological domain" description="Mitochondrial intermembrane" evidence="1">
    <location>
        <begin position="145"/>
        <end position="601"/>
    </location>
</feature>
<feature type="transmembrane region" description="Helical" evidence="1">
    <location>
        <begin position="602"/>
        <end position="622"/>
    </location>
</feature>
<gene>
    <name type="primary">MDM32</name>
    <name type="ordered locus">YOR147W</name>
    <name type="ORF">O3521</name>
</gene>
<name>MDM32_YEAST</name>
<reference key="1">
    <citation type="journal article" date="1997" name="Yeast">
        <title>Analysis of a 35.6 kb region on the right arm of Saccharomyces cerevisiae chromosome XV.</title>
        <authorList>
            <person name="Bordonne R."/>
            <person name="Camasses A."/>
            <person name="Madania A."/>
            <person name="Poch O."/>
            <person name="Tarassov I.A."/>
            <person name="Winsor B."/>
            <person name="Martin R.P."/>
        </authorList>
    </citation>
    <scope>NUCLEOTIDE SEQUENCE [GENOMIC DNA]</scope>
    <source>
        <strain>S288c / FY1678</strain>
    </source>
</reference>
<reference key="2">
    <citation type="journal article" date="1997" name="Nature">
        <title>The nucleotide sequence of Saccharomyces cerevisiae chromosome XV.</title>
        <authorList>
            <person name="Dujon B."/>
            <person name="Albermann K."/>
            <person name="Aldea M."/>
            <person name="Alexandraki D."/>
            <person name="Ansorge W."/>
            <person name="Arino J."/>
            <person name="Benes V."/>
            <person name="Bohn C."/>
            <person name="Bolotin-Fukuhara M."/>
            <person name="Bordonne R."/>
            <person name="Boyer J."/>
            <person name="Camasses A."/>
            <person name="Casamayor A."/>
            <person name="Casas C."/>
            <person name="Cheret G."/>
            <person name="Cziepluch C."/>
            <person name="Daignan-Fornier B."/>
            <person name="Dang V.-D."/>
            <person name="de Haan M."/>
            <person name="Delius H."/>
            <person name="Durand P."/>
            <person name="Fairhead C."/>
            <person name="Feldmann H."/>
            <person name="Gaillon L."/>
            <person name="Galisson F."/>
            <person name="Gamo F.-J."/>
            <person name="Gancedo C."/>
            <person name="Goffeau A."/>
            <person name="Goulding S.E."/>
            <person name="Grivell L.A."/>
            <person name="Habbig B."/>
            <person name="Hand N.J."/>
            <person name="Hani J."/>
            <person name="Hattenhorst U."/>
            <person name="Hebling U."/>
            <person name="Hernando Y."/>
            <person name="Herrero E."/>
            <person name="Heumann K."/>
            <person name="Hiesel R."/>
            <person name="Hilger F."/>
            <person name="Hofmann B."/>
            <person name="Hollenberg C.P."/>
            <person name="Hughes B."/>
            <person name="Jauniaux J.-C."/>
            <person name="Kalogeropoulos A."/>
            <person name="Katsoulou C."/>
            <person name="Kordes E."/>
            <person name="Lafuente M.J."/>
            <person name="Landt O."/>
            <person name="Louis E.J."/>
            <person name="Maarse A.C."/>
            <person name="Madania A."/>
            <person name="Mannhaupt G."/>
            <person name="Marck C."/>
            <person name="Martin R.P."/>
            <person name="Mewes H.-W."/>
            <person name="Michaux G."/>
            <person name="Paces V."/>
            <person name="Parle-McDermott A.G."/>
            <person name="Pearson B.M."/>
            <person name="Perrin A."/>
            <person name="Pettersson B."/>
            <person name="Poch O."/>
            <person name="Pohl T.M."/>
            <person name="Poirey R."/>
            <person name="Portetelle D."/>
            <person name="Pujol A."/>
            <person name="Purnelle B."/>
            <person name="Ramezani Rad M."/>
            <person name="Rechmann S."/>
            <person name="Schwager C."/>
            <person name="Schweizer M."/>
            <person name="Sor F."/>
            <person name="Sterky F."/>
            <person name="Tarassov I.A."/>
            <person name="Teodoru C."/>
            <person name="Tettelin H."/>
            <person name="Thierry A."/>
            <person name="Tobiasch E."/>
            <person name="Tzermia M."/>
            <person name="Uhlen M."/>
            <person name="Unseld M."/>
            <person name="Valens M."/>
            <person name="Vandenbol M."/>
            <person name="Vetter I."/>
            <person name="Vlcek C."/>
            <person name="Voet M."/>
            <person name="Volckaert G."/>
            <person name="Voss H."/>
            <person name="Wambutt R."/>
            <person name="Wedler H."/>
            <person name="Wiemann S."/>
            <person name="Winsor B."/>
            <person name="Wolfe K.H."/>
            <person name="Zollner A."/>
            <person name="Zumstein E."/>
            <person name="Kleine K."/>
        </authorList>
    </citation>
    <scope>NUCLEOTIDE SEQUENCE [LARGE SCALE GENOMIC DNA]</scope>
    <source>
        <strain>ATCC 204508 / S288c</strain>
    </source>
</reference>
<reference key="3">
    <citation type="journal article" date="2014" name="G3 (Bethesda)">
        <title>The reference genome sequence of Saccharomyces cerevisiae: Then and now.</title>
        <authorList>
            <person name="Engel S.R."/>
            <person name="Dietrich F.S."/>
            <person name="Fisk D.G."/>
            <person name="Binkley G."/>
            <person name="Balakrishnan R."/>
            <person name="Costanzo M.C."/>
            <person name="Dwight S.S."/>
            <person name="Hitz B.C."/>
            <person name="Karra K."/>
            <person name="Nash R.S."/>
            <person name="Weng S."/>
            <person name="Wong E.D."/>
            <person name="Lloyd P."/>
            <person name="Skrzypek M.S."/>
            <person name="Miyasato S.R."/>
            <person name="Simison M."/>
            <person name="Cherry J.M."/>
        </authorList>
    </citation>
    <scope>GENOME REANNOTATION</scope>
    <source>
        <strain>ATCC 204508 / S288c</strain>
    </source>
</reference>
<reference key="4">
    <citation type="journal article" date="2002" name="Mol. Biol. Cell">
        <title>Genetic basis of mitochondrial function and morphology in Saccharomyces cerevisiae.</title>
        <authorList>
            <person name="Dimmer K.S."/>
            <person name="Fritz S."/>
            <person name="Fuchs F."/>
            <person name="Messerschmitt M."/>
            <person name="Weinbach N."/>
            <person name="Neupert W."/>
            <person name="Westermann B."/>
        </authorList>
    </citation>
    <scope>FUNCTION</scope>
</reference>
<reference key="5">
    <citation type="journal article" date="2003" name="Nature">
        <title>Global analysis of protein localization in budding yeast.</title>
        <authorList>
            <person name="Huh W.-K."/>
            <person name="Falvo J.V."/>
            <person name="Gerke L.C."/>
            <person name="Carroll A.S."/>
            <person name="Howson R.W."/>
            <person name="Weissman J.S."/>
            <person name="O'Shea E.K."/>
        </authorList>
    </citation>
    <scope>SUBCELLULAR LOCATION [LARGE SCALE ANALYSIS]</scope>
</reference>
<reference key="6">
    <citation type="journal article" date="2003" name="Nature">
        <title>Global analysis of protein expression in yeast.</title>
        <authorList>
            <person name="Ghaemmaghami S."/>
            <person name="Huh W.-K."/>
            <person name="Bower K."/>
            <person name="Howson R.W."/>
            <person name="Belle A."/>
            <person name="Dephoure N."/>
            <person name="O'Shea E.K."/>
            <person name="Weissman J.S."/>
        </authorList>
    </citation>
    <scope>LEVEL OF PROTEIN EXPRESSION [LARGE SCALE ANALYSIS]</scope>
</reference>
<reference key="7">
    <citation type="journal article" date="2005" name="J. Cell Biol.">
        <title>Mdm31 and Mdm32 are inner membrane proteins required for maintenance of mitochondrial shape and stability of mitochondrial DNA nucleoids in yeast.</title>
        <authorList>
            <person name="Dimmer K.S."/>
            <person name="Jakobs S."/>
            <person name="Vogel F."/>
            <person name="Altmann K."/>
            <person name="Westermann B."/>
        </authorList>
    </citation>
    <scope>FUNCTION</scope>
    <scope>SUBCELLULAR LOCATION</scope>
    <scope>INTERACTION WITH MDM31</scope>
</reference>
<reference key="8">
    <citation type="journal article" date="2005" name="Nucleic Acids Res.">
        <title>Mapping of transcription start sites in Saccharomyces cerevisiae using 5' SAGE.</title>
        <authorList>
            <person name="Zhang Z."/>
            <person name="Dietrich F.S."/>
        </authorList>
    </citation>
    <scope>IDENTIFICATION OF PROBABLE INITIATION SITE</scope>
</reference>
<protein>
    <recommendedName>
        <fullName>Mitochondrial distribution and morphology protein 32</fullName>
    </recommendedName>
</protein>
<dbReference type="EMBL" id="U55020">
    <property type="protein sequence ID" value="AAC49633.1"/>
    <property type="status" value="ALT_INIT"/>
    <property type="molecule type" value="Genomic_DNA"/>
</dbReference>
<dbReference type="EMBL" id="Z75055">
    <property type="protein sequence ID" value="CAA99353.1"/>
    <property type="status" value="ALT_INIT"/>
    <property type="molecule type" value="Genomic_DNA"/>
</dbReference>
<dbReference type="EMBL" id="BK006948">
    <property type="protein sequence ID" value="DAA10920.1"/>
    <property type="molecule type" value="Genomic_DNA"/>
</dbReference>
<dbReference type="PIR" id="S67035">
    <property type="entry name" value="S67035"/>
</dbReference>
<dbReference type="RefSeq" id="NP_014790.4">
    <property type="nucleotide sequence ID" value="NM_001183566.3"/>
</dbReference>
<dbReference type="SMR" id="Q12171"/>
<dbReference type="BioGRID" id="34543">
    <property type="interactions" value="515"/>
</dbReference>
<dbReference type="DIP" id="DIP-2556N"/>
<dbReference type="FunCoup" id="Q12171">
    <property type="interactions" value="65"/>
</dbReference>
<dbReference type="IntAct" id="Q12171">
    <property type="interactions" value="7"/>
</dbReference>
<dbReference type="MINT" id="Q12171"/>
<dbReference type="STRING" id="4932.YOR147W"/>
<dbReference type="iPTMnet" id="Q12171"/>
<dbReference type="PaxDb" id="4932-YOR147W"/>
<dbReference type="PeptideAtlas" id="Q12171"/>
<dbReference type="EnsemblFungi" id="YOR147W_mRNA">
    <property type="protein sequence ID" value="YOR147W"/>
    <property type="gene ID" value="YOR147W"/>
</dbReference>
<dbReference type="GeneID" id="854318"/>
<dbReference type="KEGG" id="sce:YOR147W"/>
<dbReference type="AGR" id="SGD:S000005673"/>
<dbReference type="SGD" id="S000005673">
    <property type="gene designation" value="MDM32"/>
</dbReference>
<dbReference type="VEuPathDB" id="FungiDB:YOR147W"/>
<dbReference type="eggNOG" id="ENOG502QQU5">
    <property type="taxonomic scope" value="Eukaryota"/>
</dbReference>
<dbReference type="GeneTree" id="ENSGT00940000176498"/>
<dbReference type="HOGENOM" id="CLU_016236_3_0_1"/>
<dbReference type="InParanoid" id="Q12171"/>
<dbReference type="OMA" id="FAKEMVG"/>
<dbReference type="OrthoDB" id="17678at2759"/>
<dbReference type="BioCyc" id="YEAST:G3O-33665-MONOMER"/>
<dbReference type="BioGRID-ORCS" id="854318">
    <property type="hits" value="8 hits in 10 CRISPR screens"/>
</dbReference>
<dbReference type="PRO" id="PR:Q12171"/>
<dbReference type="Proteomes" id="UP000002311">
    <property type="component" value="Chromosome XV"/>
</dbReference>
<dbReference type="RNAct" id="Q12171">
    <property type="molecule type" value="protein"/>
</dbReference>
<dbReference type="GO" id="GO:0005743">
    <property type="term" value="C:mitochondrial inner membrane"/>
    <property type="evidence" value="ECO:0000314"/>
    <property type="project" value="SGD"/>
</dbReference>
<dbReference type="GO" id="GO:0005739">
    <property type="term" value="C:mitochondrion"/>
    <property type="evidence" value="ECO:0007005"/>
    <property type="project" value="SGD"/>
</dbReference>
<dbReference type="GO" id="GO:0006873">
    <property type="term" value="P:intracellular monoatomic ion homeostasis"/>
    <property type="evidence" value="ECO:0000315"/>
    <property type="project" value="SGD"/>
</dbReference>
<dbReference type="GO" id="GO:0000001">
    <property type="term" value="P:mitochondrion inheritance"/>
    <property type="evidence" value="ECO:0000315"/>
    <property type="project" value="SGD"/>
</dbReference>
<dbReference type="GO" id="GO:0007005">
    <property type="term" value="P:mitochondrion organization"/>
    <property type="evidence" value="ECO:0000315"/>
    <property type="project" value="SGD"/>
</dbReference>
<dbReference type="InterPro" id="IPR012571">
    <property type="entry name" value="Mdm31/Mdm32"/>
</dbReference>
<dbReference type="PANTHER" id="PTHR31068">
    <property type="entry name" value="MITOCHONDRIAL DISTRIBUTION AND MORPHOLOGY PROTEIN 31"/>
    <property type="match status" value="1"/>
</dbReference>
<dbReference type="PANTHER" id="PTHR31068:SF1">
    <property type="entry name" value="MITOCHONDRIAL DISTRIBUTION AND MORPHOLOGY PROTEIN 32"/>
    <property type="match status" value="1"/>
</dbReference>
<dbReference type="Pfam" id="PF08118">
    <property type="entry name" value="MDM31_MDM32"/>
    <property type="match status" value="2"/>
</dbReference>
<proteinExistence type="evidence at protein level"/>
<accession>Q12171</accession>
<accession>D6W2K4</accession>
<comment type="function">
    <text evidence="2 4">Involved in the organization of the mitochondrial membranes and the global structure of the mitochondria. Also required for mitochondrial distribution and mobility as well as for the maintenance of mitochondrial DNA nucleoids structures.</text>
</comment>
<comment type="subunit">
    <text evidence="4">Interacts with MDM31. Participates in a complex of about 175 kDa.</text>
</comment>
<comment type="subcellular location">
    <subcellularLocation>
        <location evidence="5">Mitochondrion inner membrane</location>
        <topology evidence="5">Multi-pass membrane protein</topology>
    </subcellularLocation>
</comment>
<comment type="miscellaneous">
    <text evidence="3">Present with 10400 molecules/cell in log phase SD medium.</text>
</comment>
<comment type="similarity">
    <text evidence="5">Belongs to the MDM31/MDM32 family.</text>
</comment>
<comment type="sequence caution" evidence="5">
    <conflict type="erroneous initiation">
        <sequence resource="EMBL-CDS" id="AAC49633"/>
    </conflict>
</comment>
<comment type="sequence caution" evidence="5">
    <conflict type="erroneous initiation">
        <sequence resource="EMBL-CDS" id="CAA99353"/>
    </conflict>
</comment>
<evidence type="ECO:0000255" key="1"/>
<evidence type="ECO:0000269" key="2">
    <source>
    </source>
</evidence>
<evidence type="ECO:0000269" key="3">
    <source>
    </source>
</evidence>
<evidence type="ECO:0000269" key="4">
    <source>
    </source>
</evidence>
<evidence type="ECO:0000305" key="5"/>